<accession>C0LGT6</accession>
<accession>Q0WWU8</accession>
<accession>Q8S9I3</accession>
<comment type="function">
    <text evidence="6 9 10 11 12 14 16">Constitutes the pattern-recognition receptor (PPR) that determines the specific perception of elongation factor Tu (EF-Tu), a potent elicitor of the defense response to pathogen-associated molecular patterns (PAMPs); phosphorylates BIK1 upon elicitation to regulate immune responses such as defense hormone expression (e.g. jasmonic acid (JA) and salicylic acid (SA)) (PubMed:29649442). Reduces transformation by Rhizobium radiobacter probably by inducing plant defense during the interaction. Binding to the effector AvrPto1 from P.syringae blocks the downstream plant immune response while interaction with hopD2 decreases the phosphorylation level of EFR upon elf18 treatment. Specific endoplasmic reticulum quality control components (ERD2B, CRT3, UGGT and STT3A) are required for the biogenesis of EFR.</text>
</comment>
<comment type="catalytic activity">
    <reaction evidence="7 16">
        <text>L-seryl-[protein] + ATP = O-phospho-L-seryl-[protein] + ADP + H(+)</text>
        <dbReference type="Rhea" id="RHEA:17989"/>
        <dbReference type="Rhea" id="RHEA-COMP:9863"/>
        <dbReference type="Rhea" id="RHEA-COMP:11604"/>
        <dbReference type="ChEBI" id="CHEBI:15378"/>
        <dbReference type="ChEBI" id="CHEBI:29999"/>
        <dbReference type="ChEBI" id="CHEBI:30616"/>
        <dbReference type="ChEBI" id="CHEBI:83421"/>
        <dbReference type="ChEBI" id="CHEBI:456216"/>
        <dbReference type="EC" id="2.7.11.1"/>
    </reaction>
</comment>
<comment type="catalytic activity">
    <reaction evidence="7 16">
        <text>L-threonyl-[protein] + ATP = O-phospho-L-threonyl-[protein] + ADP + H(+)</text>
        <dbReference type="Rhea" id="RHEA:46608"/>
        <dbReference type="Rhea" id="RHEA-COMP:11060"/>
        <dbReference type="Rhea" id="RHEA-COMP:11605"/>
        <dbReference type="ChEBI" id="CHEBI:15378"/>
        <dbReference type="ChEBI" id="CHEBI:30013"/>
        <dbReference type="ChEBI" id="CHEBI:30616"/>
        <dbReference type="ChEBI" id="CHEBI:61977"/>
        <dbReference type="ChEBI" id="CHEBI:456216"/>
        <dbReference type="EC" id="2.7.11.1"/>
    </reaction>
</comment>
<comment type="subunit">
    <text evidence="7 12 14 15 16">Binds to Pseudomonas syringae AvrPto1 and (via the kinase and cytoplasmic domains) to hopD2. Interacts with SERK3/BAK1, SERK4/BKK1, SERK1 and SERK2 in a specific ligand-induced manner. Binds to IOS1 (PubMed:27317676). Binds to BIK1 in the absence of pathogen elicitor; dissociates upon pathogen-associated molecular pattern (PAMP)-triggered activation (PubMed:29649442).</text>
</comment>
<comment type="interaction">
    <interactant intactId="EBI-8801168">
        <id>C0LGT6</id>
    </interactant>
    <interactant intactId="EBI-16902452">
        <id>Q8VYT3</id>
        <label>At4g30520</label>
    </interactant>
    <organismsDiffer>false</organismsDiffer>
    <experiments>2</experiments>
</comment>
<comment type="interaction">
    <interactant intactId="EBI-8801168">
        <id>C0LGT6</id>
    </interactant>
    <interactant intactId="EBI-617138">
        <id>Q94F62</id>
        <label>BAK1</label>
    </interactant>
    <organismsDiffer>false</organismsDiffer>
    <experiments>3</experiments>
</comment>
<comment type="interaction">
    <interactant intactId="EBI-8801168">
        <id>C0LGT6</id>
    </interactant>
    <interactant intactId="EBI-20651739">
        <id>Q9ZVD4</id>
        <label>LRR-RLK</label>
    </interactant>
    <organismsDiffer>false</organismsDiffer>
    <experiments>2</experiments>
</comment>
<comment type="interaction">
    <interactant intactId="EBI-8801168">
        <id>C0LGT6</id>
    </interactant>
    <interactant intactId="EBI-16146189">
        <id>Q9LFS4</id>
        <label>NIK1</label>
    </interactant>
    <organismsDiffer>false</organismsDiffer>
    <experiments>2</experiments>
</comment>
<comment type="interaction">
    <interactant intactId="EBI-8801168">
        <id>C0LGT6</id>
    </interactant>
    <interactant intactId="EBI-1393626">
        <id>Q03250</id>
        <label>RBG7</label>
    </interactant>
    <organismsDiffer>false</organismsDiffer>
    <experiments>4</experiments>
</comment>
<comment type="interaction">
    <interactant intactId="EBI-8801168">
        <id>C0LGT6</id>
    </interactant>
    <interactant intactId="EBI-16887868">
        <id>Q8LPS5</id>
        <label>SERK5</label>
    </interactant>
    <organismsDiffer>false</organismsDiffer>
    <experiments>4</experiments>
</comment>
<comment type="interaction">
    <interactant intactId="EBI-8801168">
        <id>C0LGT6</id>
    </interactant>
    <interactant intactId="EBI-16096022">
        <id>Q79LY0</id>
        <label>hopD2</label>
    </interactant>
    <organismsDiffer>true</organismsDiffer>
    <experiments>3</experiments>
</comment>
<comment type="subcellular location">
    <subcellularLocation>
        <location>Cell membrane</location>
        <topology>Single-pass type I membrane protein</topology>
    </subcellularLocation>
    <subcellularLocation>
        <location>Endomembrane system</location>
        <topology>Single-pass type I membrane protein</topology>
    </subcellularLocation>
</comment>
<comment type="domain">
    <text evidence="11">The last two LRR (561-597) are necessary for elf18 binding and functionality.</text>
</comment>
<comment type="PTM">
    <text evidence="14">Autophosphorylated after elicitation with elfl18. Autophosphorylation is inhibited by the binding with avrPto1. Phosphorylation at T-836 is required for immune signaling.</text>
</comment>
<comment type="PTM">
    <text evidence="8">Polyubiquitinated at the kinase domain mediated by P.syringae AvrPtoB.</text>
</comment>
<comment type="disruption phenotype">
    <text evidence="6">Enhanced susceptibility to R.radiobacter.</text>
</comment>
<comment type="similarity">
    <text evidence="3">Belongs to the protein kinase superfamily. Ser/Thr protein kinase family.</text>
</comment>
<evidence type="ECO:0000250" key="1">
    <source>
        <dbReference type="UniProtKB" id="O22476"/>
    </source>
</evidence>
<evidence type="ECO:0000255" key="2"/>
<evidence type="ECO:0000255" key="3">
    <source>
        <dbReference type="PROSITE-ProRule" id="PRU00159"/>
    </source>
</evidence>
<evidence type="ECO:0000255" key="4">
    <source>
        <dbReference type="PROSITE-ProRule" id="PRU10027"/>
    </source>
</evidence>
<evidence type="ECO:0000256" key="5">
    <source>
        <dbReference type="SAM" id="MobiDB-lite"/>
    </source>
</evidence>
<evidence type="ECO:0000269" key="6">
    <source>
    </source>
</evidence>
<evidence type="ECO:0000269" key="7">
    <source>
    </source>
</evidence>
<evidence type="ECO:0000269" key="8">
    <source>
    </source>
</evidence>
<evidence type="ECO:0000269" key="9">
    <source>
    </source>
</evidence>
<evidence type="ECO:0000269" key="10">
    <source>
    </source>
</evidence>
<evidence type="ECO:0000269" key="11">
    <source>
    </source>
</evidence>
<evidence type="ECO:0000269" key="12">
    <source>
    </source>
</evidence>
<evidence type="ECO:0000269" key="13">
    <source>
    </source>
</evidence>
<evidence type="ECO:0000269" key="14">
    <source>
    </source>
</evidence>
<evidence type="ECO:0000269" key="15">
    <source>
    </source>
</evidence>
<evidence type="ECO:0000269" key="16">
    <source>
    </source>
</evidence>
<evidence type="ECO:0000303" key="17">
    <source>
    </source>
</evidence>
<evidence type="ECO:0000305" key="18"/>
<evidence type="ECO:0000312" key="19">
    <source>
        <dbReference type="Araport" id="AT5G20480"/>
    </source>
</evidence>
<evidence type="ECO:0000312" key="20">
    <source>
        <dbReference type="EMBL" id="AF296833"/>
    </source>
</evidence>
<proteinExistence type="evidence at protein level"/>
<feature type="signal peptide" evidence="2">
    <location>
        <begin position="1"/>
        <end position="24"/>
    </location>
</feature>
<feature type="chain" id="PRO_0000387508" description="LRR receptor-like serine/threonine-protein kinase EFR">
    <location>
        <begin position="25"/>
        <end position="1031"/>
    </location>
</feature>
<feature type="topological domain" description="Extracellular" evidence="2">
    <location>
        <begin position="25"/>
        <end position="653"/>
    </location>
</feature>
<feature type="transmembrane region" description="Helical" evidence="2">
    <location>
        <begin position="654"/>
        <end position="674"/>
    </location>
</feature>
<feature type="topological domain" description="Cytoplasmic" evidence="2">
    <location>
        <begin position="675"/>
        <end position="1031"/>
    </location>
</feature>
<feature type="repeat" description="LRR 1">
    <location>
        <begin position="98"/>
        <end position="120"/>
    </location>
</feature>
<feature type="repeat" description="LRR 2">
    <location>
        <begin position="122"/>
        <end position="144"/>
    </location>
</feature>
<feature type="repeat" description="LRR 3">
    <location>
        <begin position="146"/>
        <end position="168"/>
    </location>
</feature>
<feature type="repeat" description="LRR 4">
    <location>
        <begin position="170"/>
        <end position="193"/>
    </location>
</feature>
<feature type="repeat" description="LRR 5">
    <location>
        <begin position="194"/>
        <end position="216"/>
    </location>
</feature>
<feature type="repeat" description="LRR 6">
    <location>
        <begin position="218"/>
        <end position="240"/>
    </location>
</feature>
<feature type="repeat" description="LRR 7">
    <location>
        <begin position="242"/>
        <end position="264"/>
    </location>
</feature>
<feature type="repeat" description="LRR 8">
    <location>
        <begin position="267"/>
        <end position="289"/>
    </location>
</feature>
<feature type="repeat" description="LRR 9">
    <location>
        <begin position="291"/>
        <end position="312"/>
    </location>
</feature>
<feature type="repeat" description="LRR 10">
    <location>
        <begin position="315"/>
        <end position="335"/>
    </location>
</feature>
<feature type="repeat" description="LRR 11">
    <location>
        <begin position="345"/>
        <end position="368"/>
    </location>
</feature>
<feature type="repeat" description="LRR 12">
    <location>
        <begin position="370"/>
        <end position="392"/>
    </location>
</feature>
<feature type="repeat" description="LRR 13">
    <location>
        <begin position="394"/>
        <end position="416"/>
    </location>
</feature>
<feature type="repeat" description="LRR 14">
    <location>
        <begin position="418"/>
        <end position="440"/>
    </location>
</feature>
<feature type="repeat" description="LRR 15">
    <location>
        <begin position="442"/>
        <end position="464"/>
    </location>
</feature>
<feature type="repeat" description="LRR 16">
    <location>
        <begin position="466"/>
        <end position="487"/>
    </location>
</feature>
<feature type="repeat" description="LRR 17">
    <location>
        <begin position="490"/>
        <end position="512"/>
    </location>
</feature>
<feature type="repeat" description="LRR 18">
    <location>
        <begin position="514"/>
        <end position="536"/>
    </location>
</feature>
<feature type="repeat" description="LRR 19">
    <location>
        <begin position="538"/>
        <end position="560"/>
    </location>
</feature>
<feature type="repeat" description="LRR 20">
    <location>
        <begin position="561"/>
        <end position="584"/>
    </location>
</feature>
<feature type="repeat" description="LRR 21">
    <location>
        <begin position="585"/>
        <end position="597"/>
    </location>
</feature>
<feature type="domain" description="Protein kinase" evidence="3">
    <location>
        <begin position="712"/>
        <end position="1001"/>
    </location>
</feature>
<feature type="region of interest" description="Disordered" evidence="5">
    <location>
        <begin position="1005"/>
        <end position="1031"/>
    </location>
</feature>
<feature type="compositionally biased region" description="Polar residues" evidence="5">
    <location>
        <begin position="1005"/>
        <end position="1020"/>
    </location>
</feature>
<feature type="active site" description="Proton acceptor" evidence="3 4">
    <location>
        <position position="849"/>
    </location>
</feature>
<feature type="binding site" evidence="3">
    <location>
        <begin position="718"/>
        <end position="726"/>
    </location>
    <ligand>
        <name>ATP</name>
        <dbReference type="ChEBI" id="CHEBI:30616"/>
    </ligand>
</feature>
<feature type="binding site" evidence="3">
    <location>
        <position position="741"/>
    </location>
    <ligand>
        <name>ATP</name>
        <dbReference type="ChEBI" id="CHEBI:30616"/>
    </ligand>
</feature>
<feature type="modified residue" description="Phosphothreonine" evidence="1">
    <location>
        <position position="709"/>
    </location>
</feature>
<feature type="modified residue" description="Phosphotyrosine" evidence="1">
    <location>
        <position position="791"/>
    </location>
</feature>
<feature type="modified residue" description="Phosphotyrosine" evidence="14">
    <location>
        <position position="836"/>
    </location>
</feature>
<feature type="modified residue" description="Phosphotyrosine" evidence="14">
    <location>
        <position position="897"/>
    </location>
</feature>
<feature type="glycosylation site" description="N-linked (GlcNAc...) asparagine" evidence="2">
    <location>
        <position position="28"/>
    </location>
</feature>
<feature type="glycosylation site" description="N-linked (GlcNAc...) asparagine" evidence="2">
    <location>
        <position position="55"/>
    </location>
</feature>
<feature type="glycosylation site" description="N-linked (GlcNAc...) asparagine" evidence="2">
    <location>
        <position position="95"/>
    </location>
</feature>
<feature type="glycosylation site" description="N-linked (GlcNAc...) asparagine" evidence="2">
    <location>
        <position position="127"/>
    </location>
</feature>
<feature type="glycosylation site" description="N-linked (GlcNAc...) asparagine" evidence="2">
    <location>
        <position position="143"/>
    </location>
</feature>
<feature type="glycosylation site" description="N-linked (GlcNAc...) asparagine" evidence="2">
    <location>
        <position position="180"/>
    </location>
</feature>
<feature type="glycosylation site" description="N-linked (GlcNAc...) asparagine" evidence="2">
    <location>
        <position position="191"/>
    </location>
</feature>
<feature type="glycosylation site" description="N-linked (GlcNAc...) asparagine" evidence="2">
    <location>
        <position position="239"/>
    </location>
</feature>
<feature type="glycosylation site" description="N-linked (GlcNAc...) asparagine" evidence="2">
    <location>
        <position position="288"/>
    </location>
</feature>
<feature type="glycosylation site" description="N-linked (GlcNAc...) asparagine" evidence="2">
    <location>
        <position position="323"/>
    </location>
</feature>
<feature type="glycosylation site" description="N-linked (GlcNAc...) asparagine" evidence="2">
    <location>
        <position position="329"/>
    </location>
</feature>
<feature type="glycosylation site" description="N-linked (GlcNAc...) asparagine" evidence="2">
    <location>
        <position position="342"/>
    </location>
</feature>
<feature type="glycosylation site" description="N-linked (GlcNAc...) asparagine" evidence="2">
    <location>
        <position position="366"/>
    </location>
</feature>
<feature type="glycosylation site" description="N-linked (GlcNAc...) asparagine" evidence="2">
    <location>
        <position position="439"/>
    </location>
</feature>
<feature type="glycosylation site" description="N-linked (GlcNAc...) asparagine" evidence="2">
    <location>
        <position position="478"/>
    </location>
</feature>
<feature type="glycosylation site" description="N-linked (GlcNAc...) asparagine" evidence="2">
    <location>
        <position position="571"/>
    </location>
</feature>
<feature type="glycosylation site" description="N-linked (GlcNAc...) asparagine" evidence="2">
    <location>
        <position position="590"/>
    </location>
</feature>
<feature type="glycosylation site" description="N-linked (GlcNAc...) asparagine" evidence="2">
    <location>
        <position position="608"/>
    </location>
</feature>
<feature type="mutagenesis site" description="No effect on elf18 sensitivity." evidence="13">
    <original>IS</original>
    <variation>AA</variation>
    <location>
        <begin position="76"/>
        <end position="77"/>
    </location>
</feature>
<feature type="mutagenesis site" description="No effect on elf18 sensitivity." evidence="13">
    <original>GG</original>
    <variation>AA</variation>
    <location>
        <begin position="81"/>
        <end position="82"/>
    </location>
</feature>
<feature type="mutagenesis site" description="Insensitive to elf18." evidence="13">
    <original>NLAD</original>
    <variation>ALAA</variation>
    <location>
        <begin position="103"/>
        <end position="106"/>
    </location>
</feature>
<feature type="mutagenesis site" description="No effect on elf18 sensitivity." evidence="13">
    <original>GT</original>
    <variation>AA</variation>
    <location>
        <begin position="274"/>
        <end position="275"/>
    </location>
</feature>
<feature type="mutagenesis site" description="No effect on elf18 sensitivity." evidence="13">
    <original>ER</original>
    <variation>AA</variation>
    <location>
        <begin position="293"/>
        <end position="294"/>
    </location>
</feature>
<feature type="mutagenesis site" description="No effect on elf18 sensitivity." evidence="13">
    <original>SS</original>
    <variation>AA</variation>
    <location>
        <begin position="298"/>
        <end position="299"/>
    </location>
</feature>
<feature type="mutagenesis site" description="Decreased elf18 sensitivity." evidence="13">
    <original>WW</original>
    <variation>AA</variation>
    <location>
        <begin position="317"/>
        <end position="318"/>
    </location>
</feature>
<feature type="mutagenesis site" description="Decreased elf18 sensitivity." evidence="13">
    <original>EY</original>
    <variation>AA</variation>
    <location>
        <begin position="347"/>
        <end position="348"/>
    </location>
</feature>
<feature type="mutagenesis site" description="No effect on elf18 sensitivity." evidence="13">
    <original>SLF</original>
    <variation>ALA</variation>
    <location>
        <begin position="373"/>
        <end position="375"/>
    </location>
</feature>
<feature type="mutagenesis site" description="Decreased elf18 sensitivity." evidence="13">
    <original>ELS</original>
    <variation>ALA</variation>
    <location>
        <begin position="397"/>
        <end position="399"/>
    </location>
</feature>
<feature type="mutagenesis site" description="Insensitive to elf18." evidence="13">
    <original>HLN</original>
    <variation>ALA</variation>
    <location>
        <begin position="447"/>
        <end position="449"/>
    </location>
</feature>
<feature type="mutagenesis site" description="Insensitive to elf18." evidence="13">
    <original>DLWMD</original>
    <variation>ALWMA</variation>
    <location>
        <begin position="469"/>
        <end position="473"/>
    </location>
</feature>
<feature type="mutagenesis site" description="Decreased elf18 sensitivity." evidence="13">
    <original>NVDFS</original>
    <variation>AVDFA</variation>
    <location>
        <begin position="564"/>
        <end position="568"/>
    </location>
</feature>
<feature type="mutagenesis site" description="Insensitive to elf18." evidence="13">
    <original>NLN</original>
    <variation>ALA</variation>
    <location>
        <begin position="588"/>
        <end position="590"/>
    </location>
</feature>
<feature type="mutagenesis site" description="No effect on elf18-triggered immunity." evidence="14">
    <original>Y</original>
    <variation>F</variation>
    <location>
        <position position="702"/>
    </location>
</feature>
<feature type="mutagenesis site" description="No effect on elf18-triggered immunity." evidence="14">
    <original>Y</original>
    <variation>F</variation>
    <location>
        <position position="791"/>
    </location>
</feature>
<feature type="mutagenesis site" description="Loss of elf18-triggered immunity, but no effect on the kinase activity." evidence="14">
    <original>Y</original>
    <variation>F</variation>
    <location>
        <position position="836"/>
    </location>
</feature>
<feature type="mutagenesis site" description="Loss of kinase activity." evidence="14">
    <original>D</original>
    <variation>N</variation>
    <location>
        <position position="849"/>
    </location>
</feature>
<feature type="mutagenesis site" description="No effect on elf18-triggered immunity." evidence="14">
    <original>Y</original>
    <variation>F</variation>
    <location>
        <position position="875"/>
    </location>
</feature>
<feature type="mutagenesis site" description="No effect on elf18-triggered immunity." evidence="14">
    <original>Y</original>
    <variation>F</variation>
    <location>
        <position position="877"/>
    </location>
</feature>
<feature type="mutagenesis site" description="No effect on elf18-triggered immunity." evidence="14">
    <original>Y</original>
    <variation>F</variation>
    <location>
        <position position="897"/>
    </location>
</feature>
<feature type="mutagenesis site" description="No effect on elf18-triggered immunity." evidence="14">
    <original>Y</original>
    <variation>F</variation>
    <location>
        <position position="902"/>
    </location>
</feature>
<feature type="mutagenesis site" description="No effect on elf18-triggered immunity." evidence="14">
    <original>Y</original>
    <variation>F</variation>
    <location>
        <position position="915"/>
    </location>
</feature>
<feature type="mutagenesis site" description="No effect on elf18-triggered immunity." evidence="14">
    <original>Y</original>
    <variation>F</variation>
    <location>
        <position position="939"/>
    </location>
</feature>
<feature type="mutagenesis site" description="No effect on elf18-triggered immunity." evidence="14">
    <original>Y</original>
    <variation>F</variation>
    <location>
        <position position="944"/>
    </location>
</feature>
<feature type="mutagenesis site" description="No effect on elf18-triggered immunity." evidence="14">
    <original>Y</original>
    <variation>F</variation>
    <location>
        <position position="979"/>
    </location>
</feature>
<feature type="sequence conflict" description="In Ref. 5; BAE98400." evidence="18" ref="5">
    <original>G</original>
    <variation>L</variation>
    <location>
        <position position="893"/>
    </location>
</feature>
<feature type="sequence conflict" description="In Ref. 3; AAL77697/AAO64755." evidence="18" ref="3">
    <original>K</original>
    <variation>E</variation>
    <location>
        <position position="929"/>
    </location>
</feature>
<dbReference type="EC" id="2.7.11.1" evidence="7 16"/>
<dbReference type="EMBL" id="AF296833">
    <property type="status" value="NOT_ANNOTATED_CDS"/>
    <property type="molecule type" value="Genomic_DNA"/>
</dbReference>
<dbReference type="EMBL" id="CP002688">
    <property type="protein sequence ID" value="AED92850.1"/>
    <property type="molecule type" value="Genomic_DNA"/>
</dbReference>
<dbReference type="EMBL" id="CP002688">
    <property type="protein sequence ID" value="ANM70991.1"/>
    <property type="molecule type" value="Genomic_DNA"/>
</dbReference>
<dbReference type="EMBL" id="AY075690">
    <property type="protein sequence ID" value="AAL77697.1"/>
    <property type="molecule type" value="mRNA"/>
</dbReference>
<dbReference type="EMBL" id="BT005820">
    <property type="protein sequence ID" value="AAO64755.1"/>
    <property type="molecule type" value="mRNA"/>
</dbReference>
<dbReference type="EMBL" id="FJ708780">
    <property type="protein sequence ID" value="ACN59371.1"/>
    <property type="molecule type" value="mRNA"/>
</dbReference>
<dbReference type="EMBL" id="AK226237">
    <property type="protein sequence ID" value="BAE98400.1"/>
    <property type="molecule type" value="mRNA"/>
</dbReference>
<dbReference type="RefSeq" id="NP_001318610.1">
    <property type="nucleotide sequence ID" value="NM_001343669.1"/>
</dbReference>
<dbReference type="RefSeq" id="NP_197548.1">
    <property type="nucleotide sequence ID" value="NM_122055.5"/>
</dbReference>
<dbReference type="SMR" id="C0LGT6"/>
<dbReference type="BioGRID" id="17446">
    <property type="interactions" value="23"/>
</dbReference>
<dbReference type="DIP" id="DIP-61674N"/>
<dbReference type="FunCoup" id="C0LGT6">
    <property type="interactions" value="346"/>
</dbReference>
<dbReference type="IntAct" id="C0LGT6">
    <property type="interactions" value="28"/>
</dbReference>
<dbReference type="MINT" id="C0LGT6"/>
<dbReference type="STRING" id="3702.C0LGT6"/>
<dbReference type="GlyCosmos" id="C0LGT6">
    <property type="glycosylation" value="18 sites, No reported glycans"/>
</dbReference>
<dbReference type="GlyGen" id="C0LGT6">
    <property type="glycosylation" value="18 sites"/>
</dbReference>
<dbReference type="iPTMnet" id="C0LGT6"/>
<dbReference type="PaxDb" id="3702-AT5G20480.1"/>
<dbReference type="ProteomicsDB" id="220737"/>
<dbReference type="EnsemblPlants" id="AT5G20480.1">
    <property type="protein sequence ID" value="AT5G20480.1"/>
    <property type="gene ID" value="AT5G20480"/>
</dbReference>
<dbReference type="EnsemblPlants" id="AT5G20480.2">
    <property type="protein sequence ID" value="AT5G20480.2"/>
    <property type="gene ID" value="AT5G20480"/>
</dbReference>
<dbReference type="GeneID" id="832170"/>
<dbReference type="Gramene" id="AT5G20480.1">
    <property type="protein sequence ID" value="AT5G20480.1"/>
    <property type="gene ID" value="AT5G20480"/>
</dbReference>
<dbReference type="Gramene" id="AT5G20480.2">
    <property type="protein sequence ID" value="AT5G20480.2"/>
    <property type="gene ID" value="AT5G20480"/>
</dbReference>
<dbReference type="KEGG" id="ath:AT5G20480"/>
<dbReference type="Araport" id="AT5G20480"/>
<dbReference type="TAIR" id="AT5G20480">
    <property type="gene designation" value="EFR"/>
</dbReference>
<dbReference type="eggNOG" id="ENOG502QPYS">
    <property type="taxonomic scope" value="Eukaryota"/>
</dbReference>
<dbReference type="HOGENOM" id="CLU_000288_22_0_1"/>
<dbReference type="InParanoid" id="C0LGT6"/>
<dbReference type="OMA" id="SYFGNMT"/>
<dbReference type="PhylomeDB" id="C0LGT6"/>
<dbReference type="PRO" id="PR:C0LGT6"/>
<dbReference type="Proteomes" id="UP000006548">
    <property type="component" value="Chromosome 5"/>
</dbReference>
<dbReference type="ExpressionAtlas" id="C0LGT6">
    <property type="expression patterns" value="baseline and differential"/>
</dbReference>
<dbReference type="GO" id="GO:0012505">
    <property type="term" value="C:endomembrane system"/>
    <property type="evidence" value="ECO:0007669"/>
    <property type="project" value="UniProtKB-SubCell"/>
</dbReference>
<dbReference type="GO" id="GO:0005886">
    <property type="term" value="C:plasma membrane"/>
    <property type="evidence" value="ECO:0007669"/>
    <property type="project" value="UniProtKB-SubCell"/>
</dbReference>
<dbReference type="GO" id="GO:0005524">
    <property type="term" value="F:ATP binding"/>
    <property type="evidence" value="ECO:0007669"/>
    <property type="project" value="UniProtKB-KW"/>
</dbReference>
<dbReference type="GO" id="GO:0106310">
    <property type="term" value="F:protein serine kinase activity"/>
    <property type="evidence" value="ECO:0007669"/>
    <property type="project" value="RHEA"/>
</dbReference>
<dbReference type="GO" id="GO:0004674">
    <property type="term" value="F:protein serine/threonine kinase activity"/>
    <property type="evidence" value="ECO:0007669"/>
    <property type="project" value="UniProtKB-KW"/>
</dbReference>
<dbReference type="GO" id="GO:0019199">
    <property type="term" value="F:transmembrane receptor protein kinase activity"/>
    <property type="evidence" value="ECO:0000304"/>
    <property type="project" value="TAIR"/>
</dbReference>
<dbReference type="GO" id="GO:0016045">
    <property type="term" value="P:detection of bacterium"/>
    <property type="evidence" value="ECO:0000314"/>
    <property type="project" value="TAIR"/>
</dbReference>
<dbReference type="GO" id="GO:0002764">
    <property type="term" value="P:immune response-regulating signaling pathway"/>
    <property type="evidence" value="ECO:0000315"/>
    <property type="project" value="TAIR"/>
</dbReference>
<dbReference type="GO" id="GO:0009626">
    <property type="term" value="P:plant-type hypersensitive response"/>
    <property type="evidence" value="ECO:0000315"/>
    <property type="project" value="TAIR"/>
</dbReference>
<dbReference type="GO" id="GO:0010359">
    <property type="term" value="P:regulation of anion channel activity"/>
    <property type="evidence" value="ECO:0000315"/>
    <property type="project" value="TAIR"/>
</dbReference>
<dbReference type="GO" id="GO:0002237">
    <property type="term" value="P:response to molecule of bacterial origin"/>
    <property type="evidence" value="ECO:0000315"/>
    <property type="project" value="UniProtKB"/>
</dbReference>
<dbReference type="FunFam" id="3.80.10.10:FF:000275">
    <property type="entry name" value="Leucine-rich repeat receptor-like protein kinase"/>
    <property type="match status" value="1"/>
</dbReference>
<dbReference type="FunFam" id="3.30.200.20:FF:000432">
    <property type="entry name" value="LRR receptor-like serine/threonine-protein kinase EFR"/>
    <property type="match status" value="1"/>
</dbReference>
<dbReference type="FunFam" id="3.80.10.10:FF:000288">
    <property type="entry name" value="LRR receptor-like serine/threonine-protein kinase EFR"/>
    <property type="match status" value="1"/>
</dbReference>
<dbReference type="FunFam" id="3.80.10.10:FF:002659">
    <property type="entry name" value="Probable LRR receptor-like serine/threonine-protein kinase At3g47570"/>
    <property type="match status" value="1"/>
</dbReference>
<dbReference type="FunFam" id="1.10.510.10:FF:000358">
    <property type="entry name" value="Putative leucine-rich repeat receptor-like serine/threonine-protein kinase"/>
    <property type="match status" value="1"/>
</dbReference>
<dbReference type="Gene3D" id="3.30.200.20">
    <property type="entry name" value="Phosphorylase Kinase, domain 1"/>
    <property type="match status" value="1"/>
</dbReference>
<dbReference type="Gene3D" id="3.80.10.10">
    <property type="entry name" value="Ribonuclease Inhibitor"/>
    <property type="match status" value="4"/>
</dbReference>
<dbReference type="Gene3D" id="1.10.510.10">
    <property type="entry name" value="Transferase(Phosphotransferase) domain 1"/>
    <property type="match status" value="1"/>
</dbReference>
<dbReference type="InterPro" id="IPR011009">
    <property type="entry name" value="Kinase-like_dom_sf"/>
</dbReference>
<dbReference type="InterPro" id="IPR001611">
    <property type="entry name" value="Leu-rich_rpt"/>
</dbReference>
<dbReference type="InterPro" id="IPR003591">
    <property type="entry name" value="Leu-rich_rpt_typical-subtyp"/>
</dbReference>
<dbReference type="InterPro" id="IPR032675">
    <property type="entry name" value="LRR_dom_sf"/>
</dbReference>
<dbReference type="InterPro" id="IPR013210">
    <property type="entry name" value="LRR_N_plant-typ"/>
</dbReference>
<dbReference type="InterPro" id="IPR055414">
    <property type="entry name" value="LRR_R13L4/SHOC2-like"/>
</dbReference>
<dbReference type="InterPro" id="IPR051716">
    <property type="entry name" value="Plant_RL_S/T_kinase"/>
</dbReference>
<dbReference type="InterPro" id="IPR000719">
    <property type="entry name" value="Prot_kinase_dom"/>
</dbReference>
<dbReference type="InterPro" id="IPR017441">
    <property type="entry name" value="Protein_kinase_ATP_BS"/>
</dbReference>
<dbReference type="InterPro" id="IPR008271">
    <property type="entry name" value="Ser/Thr_kinase_AS"/>
</dbReference>
<dbReference type="PANTHER" id="PTHR48053">
    <property type="entry name" value="LEUCINE RICH REPEAT FAMILY PROTEIN, EXPRESSED"/>
    <property type="match status" value="1"/>
</dbReference>
<dbReference type="PANTHER" id="PTHR48053:SF143">
    <property type="entry name" value="LRR RECEPTOR-LIKE SERINE_THREONINE-PROTEIN KINASE EFR"/>
    <property type="match status" value="1"/>
</dbReference>
<dbReference type="Pfam" id="PF00560">
    <property type="entry name" value="LRR_1"/>
    <property type="match status" value="7"/>
</dbReference>
<dbReference type="Pfam" id="PF23598">
    <property type="entry name" value="LRR_14"/>
    <property type="match status" value="1"/>
</dbReference>
<dbReference type="Pfam" id="PF08263">
    <property type="entry name" value="LRRNT_2"/>
    <property type="match status" value="1"/>
</dbReference>
<dbReference type="Pfam" id="PF00069">
    <property type="entry name" value="Pkinase"/>
    <property type="match status" value="1"/>
</dbReference>
<dbReference type="SMART" id="SM00369">
    <property type="entry name" value="LRR_TYP"/>
    <property type="match status" value="8"/>
</dbReference>
<dbReference type="SMART" id="SM00220">
    <property type="entry name" value="S_TKc"/>
    <property type="match status" value="1"/>
</dbReference>
<dbReference type="SUPFAM" id="SSF52058">
    <property type="entry name" value="L domain-like"/>
    <property type="match status" value="2"/>
</dbReference>
<dbReference type="SUPFAM" id="SSF56112">
    <property type="entry name" value="Protein kinase-like (PK-like)"/>
    <property type="match status" value="1"/>
</dbReference>
<dbReference type="PROSITE" id="PS00107">
    <property type="entry name" value="PROTEIN_KINASE_ATP"/>
    <property type="match status" value="1"/>
</dbReference>
<dbReference type="PROSITE" id="PS50011">
    <property type="entry name" value="PROTEIN_KINASE_DOM"/>
    <property type="match status" value="1"/>
</dbReference>
<dbReference type="PROSITE" id="PS00108">
    <property type="entry name" value="PROTEIN_KINASE_ST"/>
    <property type="match status" value="1"/>
</dbReference>
<organism>
    <name type="scientific">Arabidopsis thaliana</name>
    <name type="common">Mouse-ear cress</name>
    <dbReference type="NCBI Taxonomy" id="3702"/>
    <lineage>
        <taxon>Eukaryota</taxon>
        <taxon>Viridiplantae</taxon>
        <taxon>Streptophyta</taxon>
        <taxon>Embryophyta</taxon>
        <taxon>Tracheophyta</taxon>
        <taxon>Spermatophyta</taxon>
        <taxon>Magnoliopsida</taxon>
        <taxon>eudicotyledons</taxon>
        <taxon>Gunneridae</taxon>
        <taxon>Pentapetalae</taxon>
        <taxon>rosids</taxon>
        <taxon>malvids</taxon>
        <taxon>Brassicales</taxon>
        <taxon>Brassicaceae</taxon>
        <taxon>Camelineae</taxon>
        <taxon>Arabidopsis</taxon>
    </lineage>
</organism>
<protein>
    <recommendedName>
        <fullName evidence="17">LRR receptor-like serine/threonine-protein kinase EFR</fullName>
        <ecNumber evidence="7 16">2.7.11.1</ecNumber>
    </recommendedName>
    <alternativeName>
        <fullName evidence="17">Elongation factor Tu receptor</fullName>
        <shortName evidence="17">EF-Tu receptor</shortName>
    </alternativeName>
</protein>
<sequence>MKLSFSLVFNALTLLLQVCIFAQARFSNETDMQALLEFKSQVSENNKREVLASWNHSSPFCNWIGVTCGRRRERVISLNLGGFKLTGVISPSIGNLSFLRLLNLADNSFGSTIPQKVGRLFRLQYLNMSYNLLEGRIPSSLSNCSRLSTVDLSSNHLGHGVPSELGSLSKLAILDLSKNNLTGNFPASLGNLTSLQKLDFAYNQMRGEIPDEVARLTQMVFFQIALNSFSGGFPPALYNISSLESLSLADNSFSGNLRADFGYLLPNLRRLLLGTNQFTGAIPKTLANISSLERFDISSNYLSGSIPLSFGKLRNLWWLGIRNNSLGNNSSSGLEFIGAVANCTQLEYLDVGYNRLGGELPASIANLSTTLTSLFLGQNLISGTIPHDIGNLVSLQELSLETNMLSGELPVSFGKLLNLQVVDLYSNAISGEIPSYFGNMTRLQKLHLNSNSFHGRIPQSLGRCRYLLDLWMDTNRLNGTIPQEILQIPSLAYIDLSNNFLTGHFPEEVGKLELLVGLGASYNKLSGKMPQAIGGCLSMEFLFMQGNSFDGAIPDISRLVSLKNVDFSNNNLSGRIPRYLASLPSLRNLNLSMNKFEGRVPTTGVFRNATAVSVFGNTNICGGVREMQLKPCIVQASPRKRKPLSVRKKVVSGICIGIASLLLIIIVASLCWFMKRKKKNNASDGNPSDSTTLGMFHEKVSYEELHSATSRFSSTNLIGSGNFGNVFKGLLGPENKLVAVKVLNLLKHGATKSFMAECETFKGIRHRNLVKLITVCSSLDSEGNDFRALVYEFMPKGSLDMWLQLEDLERVNDHSRSLTPAEKLNIAIDVASALEYLHVHCHDPVAHCDIKPSNILLDDDLTAHVSDFGLAQLLYKYDRESFLNQFSSAGVRGTIGYAAPEYGMGGQPSIQGDVYSFGILLLEMFSGKKPTDESFAGDYNLHSYTKSILSGCTSSGGSNAIDEGLRLVLQVGIKCSEEYPRDRMRTDEAVRELISIRSKFFSSKTTITESPRDAPQSSPQEWMLNTDMHTM</sequence>
<keyword id="KW-0067">ATP-binding</keyword>
<keyword id="KW-1003">Cell membrane</keyword>
<keyword id="KW-0325">Glycoprotein</keyword>
<keyword id="KW-0418">Kinase</keyword>
<keyword id="KW-0433">Leucine-rich repeat</keyword>
<keyword id="KW-0472">Membrane</keyword>
<keyword id="KW-0547">Nucleotide-binding</keyword>
<keyword id="KW-0597">Phosphoprotein</keyword>
<keyword id="KW-0611">Plant defense</keyword>
<keyword id="KW-0675">Receptor</keyword>
<keyword id="KW-1185">Reference proteome</keyword>
<keyword id="KW-0677">Repeat</keyword>
<keyword id="KW-0723">Serine/threonine-protein kinase</keyword>
<keyword id="KW-0732">Signal</keyword>
<keyword id="KW-0808">Transferase</keyword>
<keyword id="KW-0812">Transmembrane</keyword>
<keyword id="KW-1133">Transmembrane helix</keyword>
<keyword id="KW-0832">Ubl conjugation</keyword>
<reference key="1">
    <citation type="journal article" date="2000" name="Nature">
        <title>Sequence and analysis of chromosome 5 of the plant Arabidopsis thaliana.</title>
        <authorList>
            <person name="Tabata S."/>
            <person name="Kaneko T."/>
            <person name="Nakamura Y."/>
            <person name="Kotani H."/>
            <person name="Kato T."/>
            <person name="Asamizu E."/>
            <person name="Miyajima N."/>
            <person name="Sasamoto S."/>
            <person name="Kimura T."/>
            <person name="Hosouchi T."/>
            <person name="Kawashima K."/>
            <person name="Kohara M."/>
            <person name="Matsumoto M."/>
            <person name="Matsuno A."/>
            <person name="Muraki A."/>
            <person name="Nakayama S."/>
            <person name="Nakazaki N."/>
            <person name="Naruo K."/>
            <person name="Okumura S."/>
            <person name="Shinpo S."/>
            <person name="Takeuchi C."/>
            <person name="Wada T."/>
            <person name="Watanabe A."/>
            <person name="Yamada M."/>
            <person name="Yasuda M."/>
            <person name="Sato S."/>
            <person name="de la Bastide M."/>
            <person name="Huang E."/>
            <person name="Spiegel L."/>
            <person name="Gnoj L."/>
            <person name="O'Shaughnessy A."/>
            <person name="Preston R."/>
            <person name="Habermann K."/>
            <person name="Murray J."/>
            <person name="Johnson D."/>
            <person name="Rohlfing T."/>
            <person name="Nelson J."/>
            <person name="Stoneking T."/>
            <person name="Pepin K."/>
            <person name="Spieth J."/>
            <person name="Sekhon M."/>
            <person name="Armstrong J."/>
            <person name="Becker M."/>
            <person name="Belter E."/>
            <person name="Cordum H."/>
            <person name="Cordes M."/>
            <person name="Courtney L."/>
            <person name="Courtney W."/>
            <person name="Dante M."/>
            <person name="Du H."/>
            <person name="Edwards J."/>
            <person name="Fryman J."/>
            <person name="Haakensen B."/>
            <person name="Lamar E."/>
            <person name="Latreille P."/>
            <person name="Leonard S."/>
            <person name="Meyer R."/>
            <person name="Mulvaney E."/>
            <person name="Ozersky P."/>
            <person name="Riley A."/>
            <person name="Strowmatt C."/>
            <person name="Wagner-McPherson C."/>
            <person name="Wollam A."/>
            <person name="Yoakum M."/>
            <person name="Bell M."/>
            <person name="Dedhia N."/>
            <person name="Parnell L."/>
            <person name="Shah R."/>
            <person name="Rodriguez M."/>
            <person name="Hoon See L."/>
            <person name="Vil D."/>
            <person name="Baker J."/>
            <person name="Kirchoff K."/>
            <person name="Toth K."/>
            <person name="King L."/>
            <person name="Bahret A."/>
            <person name="Miller B."/>
            <person name="Marra M.A."/>
            <person name="Martienssen R."/>
            <person name="McCombie W.R."/>
            <person name="Wilson R.K."/>
            <person name="Murphy G."/>
            <person name="Bancroft I."/>
            <person name="Volckaert G."/>
            <person name="Wambutt R."/>
            <person name="Duesterhoeft A."/>
            <person name="Stiekema W."/>
            <person name="Pohl T."/>
            <person name="Entian K.-D."/>
            <person name="Terryn N."/>
            <person name="Hartley N."/>
            <person name="Bent E."/>
            <person name="Johnson S."/>
            <person name="Langham S.-A."/>
            <person name="McCullagh B."/>
            <person name="Robben J."/>
            <person name="Grymonprez B."/>
            <person name="Zimmermann W."/>
            <person name="Ramsperger U."/>
            <person name="Wedler H."/>
            <person name="Balke K."/>
            <person name="Wedler E."/>
            <person name="Peters S."/>
            <person name="van Staveren M."/>
            <person name="Dirkse W."/>
            <person name="Mooijman P."/>
            <person name="Klein Lankhorst R."/>
            <person name="Weitzenegger T."/>
            <person name="Bothe G."/>
            <person name="Rose M."/>
            <person name="Hauf J."/>
            <person name="Berneiser S."/>
            <person name="Hempel S."/>
            <person name="Feldpausch M."/>
            <person name="Lamberth S."/>
            <person name="Villarroel R."/>
            <person name="Gielen J."/>
            <person name="Ardiles W."/>
            <person name="Bents O."/>
            <person name="Lemcke K."/>
            <person name="Kolesov G."/>
            <person name="Mayer K.F.X."/>
            <person name="Rudd S."/>
            <person name="Schoof H."/>
            <person name="Schueller C."/>
            <person name="Zaccaria P."/>
            <person name="Mewes H.-W."/>
            <person name="Bevan M."/>
            <person name="Fransz P.F."/>
        </authorList>
    </citation>
    <scope>NUCLEOTIDE SEQUENCE [LARGE SCALE GENOMIC DNA]</scope>
    <source>
        <strain>cv. Columbia</strain>
    </source>
</reference>
<reference key="2">
    <citation type="journal article" date="2017" name="Plant J.">
        <title>Araport11: a complete reannotation of the Arabidopsis thaliana reference genome.</title>
        <authorList>
            <person name="Cheng C.Y."/>
            <person name="Krishnakumar V."/>
            <person name="Chan A.P."/>
            <person name="Thibaud-Nissen F."/>
            <person name="Schobel S."/>
            <person name="Town C.D."/>
        </authorList>
    </citation>
    <scope>GENOME REANNOTATION</scope>
    <source>
        <strain>cv. Columbia</strain>
    </source>
</reference>
<reference key="3">
    <citation type="journal article" date="2003" name="Science">
        <title>Empirical analysis of transcriptional activity in the Arabidopsis genome.</title>
        <authorList>
            <person name="Yamada K."/>
            <person name="Lim J."/>
            <person name="Dale J.M."/>
            <person name="Chen H."/>
            <person name="Shinn P."/>
            <person name="Palm C.J."/>
            <person name="Southwick A.M."/>
            <person name="Wu H.C."/>
            <person name="Kim C.J."/>
            <person name="Nguyen M."/>
            <person name="Pham P.K."/>
            <person name="Cheuk R.F."/>
            <person name="Karlin-Newmann G."/>
            <person name="Liu S.X."/>
            <person name="Lam B."/>
            <person name="Sakano H."/>
            <person name="Wu T."/>
            <person name="Yu G."/>
            <person name="Miranda M."/>
            <person name="Quach H.L."/>
            <person name="Tripp M."/>
            <person name="Chang C.H."/>
            <person name="Lee J.M."/>
            <person name="Toriumi M.J."/>
            <person name="Chan M.M."/>
            <person name="Tang C.C."/>
            <person name="Onodera C.S."/>
            <person name="Deng J.M."/>
            <person name="Akiyama K."/>
            <person name="Ansari Y."/>
            <person name="Arakawa T."/>
            <person name="Banh J."/>
            <person name="Banno F."/>
            <person name="Bowser L."/>
            <person name="Brooks S.Y."/>
            <person name="Carninci P."/>
            <person name="Chao Q."/>
            <person name="Choy N."/>
            <person name="Enju A."/>
            <person name="Goldsmith A.D."/>
            <person name="Gurjal M."/>
            <person name="Hansen N.F."/>
            <person name="Hayashizaki Y."/>
            <person name="Johnson-Hopson C."/>
            <person name="Hsuan V.W."/>
            <person name="Iida K."/>
            <person name="Karnes M."/>
            <person name="Khan S."/>
            <person name="Koesema E."/>
            <person name="Ishida J."/>
            <person name="Jiang P.X."/>
            <person name="Jones T."/>
            <person name="Kawai J."/>
            <person name="Kamiya A."/>
            <person name="Meyers C."/>
            <person name="Nakajima M."/>
            <person name="Narusaka M."/>
            <person name="Seki M."/>
            <person name="Sakurai T."/>
            <person name="Satou M."/>
            <person name="Tamse R."/>
            <person name="Vaysberg M."/>
            <person name="Wallender E.K."/>
            <person name="Wong C."/>
            <person name="Yamamura Y."/>
            <person name="Yuan S."/>
            <person name="Shinozaki K."/>
            <person name="Davis R.W."/>
            <person name="Theologis A."/>
            <person name="Ecker J.R."/>
        </authorList>
    </citation>
    <scope>NUCLEOTIDE SEQUENCE [LARGE SCALE MRNA]</scope>
    <source>
        <strain>cv. Columbia</strain>
    </source>
</reference>
<reference key="4">
    <citation type="journal article" date="2010" name="BMC Genomics">
        <title>Genome-wide cloning and sequence analysis of leucine-rich repeat receptor-like protein kinase genes in Arabidopsis thaliana.</title>
        <authorList>
            <person name="Gou X."/>
            <person name="He K."/>
            <person name="Yang H."/>
            <person name="Yuan T."/>
            <person name="Lin H."/>
            <person name="Clouse S.D."/>
            <person name="Li J."/>
        </authorList>
    </citation>
    <scope>NUCLEOTIDE SEQUENCE [LARGE SCALE MRNA]</scope>
    <source>
        <strain>cv. Columbia</strain>
    </source>
</reference>
<reference key="5">
    <citation type="submission" date="2006-07" db="EMBL/GenBank/DDBJ databases">
        <title>Large-scale analysis of RIKEN Arabidopsis full-length (RAFL) cDNAs.</title>
        <authorList>
            <person name="Totoki Y."/>
            <person name="Seki M."/>
            <person name="Ishida J."/>
            <person name="Nakajima M."/>
            <person name="Enju A."/>
            <person name="Kamiya A."/>
            <person name="Narusaka M."/>
            <person name="Shin-i T."/>
            <person name="Nakagawa M."/>
            <person name="Sakamoto N."/>
            <person name="Oishi K."/>
            <person name="Kohara Y."/>
            <person name="Kobayashi M."/>
            <person name="Toyoda A."/>
            <person name="Sakaki Y."/>
            <person name="Sakurai T."/>
            <person name="Iida K."/>
            <person name="Akiyama K."/>
            <person name="Satou M."/>
            <person name="Toyoda T."/>
            <person name="Konagaya A."/>
            <person name="Carninci P."/>
            <person name="Kawai J."/>
            <person name="Hayashizaki Y."/>
            <person name="Shinozaki K."/>
        </authorList>
    </citation>
    <scope>NUCLEOTIDE SEQUENCE [LARGE SCALE MRNA] OF 893-1031</scope>
    <source>
        <strain>cv. Columbia</strain>
    </source>
</reference>
<reference key="6">
    <citation type="journal article" date="2006" name="Cell">
        <title>Perception of the bacterial PAMP EF-Tu by the receptor EFR restricts Agrobacterium-mediated transformation.</title>
        <authorList>
            <person name="Zipfel C."/>
            <person name="Kunze G."/>
            <person name="Chinchilla D."/>
            <person name="Caniard A."/>
            <person name="Jones J.D.G."/>
            <person name="Boller T."/>
            <person name="Felix G."/>
        </authorList>
    </citation>
    <scope>FUNCTION</scope>
    <scope>DISRUPTION PHENOTYPE</scope>
</reference>
<reference key="7">
    <citation type="journal article" date="2008" name="Curr. Biol.">
        <title>Pseudomonas syringae effector AvrPto blocks innate immunity by targeting receptor kinases.</title>
        <authorList>
            <person name="Xiang T."/>
            <person name="Zong N."/>
            <person name="Zou Y."/>
            <person name="Wu Y."/>
            <person name="Zhang J."/>
            <person name="Xing W."/>
            <person name="Li Y."/>
            <person name="Tang X."/>
            <person name="Zhu L."/>
            <person name="Chai J."/>
            <person name="Zhou J.-M."/>
        </authorList>
    </citation>
    <scope>INTERACTION WITH PSEUDOMONAS SYRINGAE AVRPTO1</scope>
    <scope>AUTOPHOSPHORYLATION</scope>
    <scope>CATALYTIC ACTIVITY</scope>
</reference>
<reference key="8">
    <citation type="journal article" date="2008" name="Curr. Biol.">
        <title>Plant pattern-recognition receptor FLS2 is directed for degradation by the bacterial ubiquitin ligase AvrPtoB.</title>
        <authorList>
            <person name="Goehre V."/>
            <person name="Spallek T."/>
            <person name="Haeweker H."/>
            <person name="Mersmann S."/>
            <person name="Mentzel T."/>
            <person name="Boller T."/>
            <person name="de Torres M."/>
            <person name="Mansfield J.W."/>
            <person name="Robatzek S."/>
        </authorList>
    </citation>
    <scope>UBIQUITINATION BY AVRPTOB</scope>
</reference>
<reference key="9">
    <citation type="journal article" date="2009" name="EMBO J.">
        <title>Receptor quality control in the endoplasmic reticulum for plant innate immunity.</title>
        <authorList>
            <person name="Saijo Y."/>
            <person name="Tintor N."/>
            <person name="Lu X."/>
            <person name="Rauf P."/>
            <person name="Pajerowska-Mukhtar K."/>
            <person name="Haeweker H."/>
            <person name="Dong X."/>
            <person name="Robatzek S."/>
            <person name="Schulze-Lefert P."/>
        </authorList>
    </citation>
    <scope>FUNCTION</scope>
    <scope>SUBCELLULAR LOCATION</scope>
</reference>
<reference key="10">
    <citation type="journal article" date="2009" name="Proc. Natl. Acad. Sci. U.S.A.">
        <title>Specific ER quality control components required for biogenesis of the plant innate immune receptor EFR.</title>
        <authorList>
            <person name="Li J."/>
            <person name="Zhao-Hui C."/>
            <person name="Batoux M."/>
            <person name="Nekrasov V."/>
            <person name="Roux M."/>
            <person name="Chinchilla D."/>
            <person name="Zipfel C."/>
            <person name="Jones J.D."/>
        </authorList>
    </citation>
    <scope>FUNCTION</scope>
</reference>
<reference key="11">
    <citation type="journal article" date="2010" name="J. Biol. Chem.">
        <title>Arabidopsis thaliana pattern recognition receptors for bacterial elongation factor Tu and flagellin can be combined to form functional chimeric receptors.</title>
        <authorList>
            <person name="Albert M."/>
            <person name="Jehle A.K."/>
            <person name="Mueller K."/>
            <person name="Eisele C."/>
            <person name="Lipschis M."/>
            <person name="Felix G."/>
        </authorList>
    </citation>
    <scope>FUNCTION</scope>
    <scope>DOMAIN</scope>
    <scope>SUBCELLULAR LOCATION</scope>
</reference>
<reference key="12">
    <citation type="journal article" date="2011" name="PLoS ONE">
        <title>LRR conservation mapping to predict functional sites within protein leucine-rich repeat domains.</title>
        <authorList>
            <person name="Helft L."/>
            <person name="Reddy V."/>
            <person name="Chen X."/>
            <person name="Koller T."/>
            <person name="Federici L."/>
            <person name="Fernandez-Recio J."/>
            <person name="Gupta R."/>
            <person name="Bent A."/>
        </authorList>
    </citation>
    <scope>3D-STRUCTURE MODELING</scope>
    <scope>MUTAGENESIS OF 76-ILE-SER-77; 81-GLY-GLY-82; 103-ASN--ASP-106; 274-GLY-THR-275; 293-GLU-ARG-294; 298-SER-SER-299; 317-TRP-TRP-318; 347-GLU-TYR-348; 373-SER--PHE-375; 397-GLU--SER-399; 447-HIS--ASN-449; 469-ASP--ASP-473; 564-ASN--SER-568 AND 588-ASN--ASN-590</scope>
</reference>
<reference key="13">
    <citation type="journal article" date="2011" name="Plant Cell">
        <title>The Arabidopsis leucine-rich repeat receptor-like kinases BAK1/SERK3 and BKK1/SERK4 are required for innate immunity to hemibiotrophic and biotrophic pathogens.</title>
        <authorList>
            <person name="Roux M."/>
            <person name="Schwessinger B."/>
            <person name="Albrecht C."/>
            <person name="Chinchilla D."/>
            <person name="Jones A."/>
            <person name="Holton N."/>
            <person name="Malinovsky F.G."/>
            <person name="Tor M."/>
            <person name="de Vries S."/>
            <person name="Zipfel C."/>
        </authorList>
    </citation>
    <scope>FUNCTION</scope>
    <scope>INTERACTION WITH SERK3/BAK1; SERK4/BKK1; SERK1 AND SERK2</scope>
    <source>
        <strain>cv. Columbia</strain>
    </source>
</reference>
<reference key="14">
    <citation type="journal article" date="2014" name="Science">
        <title>A bacterial tyrosine phosphatase inhibits plant pattern recognition receptor activation.</title>
        <authorList>
            <person name="Macho A.P."/>
            <person name="Schwessinger B."/>
            <person name="Ntoukakis V."/>
            <person name="Brutus A."/>
            <person name="Segonzac C."/>
            <person name="Roy S."/>
            <person name="Kadota Y."/>
            <person name="Oh M.H."/>
            <person name="Sklenar J."/>
            <person name="Derbyshire P."/>
            <person name="Lozano-Duran R."/>
            <person name="Malinovsky F.G."/>
            <person name="Monaghan J."/>
            <person name="Menke F.L."/>
            <person name="Huber S.C."/>
            <person name="He S.Y."/>
            <person name="Zipfel C."/>
        </authorList>
    </citation>
    <scope>FUNCTION</scope>
    <scope>PHOSPHORYLATION AT TYR-836 AND TYR-897</scope>
    <scope>MUTAGENESIS OF TYR-702; TYR-791; TYR-836; ASP-849; TYR-875; TYR-877; TYR-897; TYR-902; TYR-915; TYR-939; TYR-944 AND TYR-979</scope>
    <scope>SUBCELLULAR LOCATION</scope>
    <scope>INTERACTION WITH HOPD2</scope>
</reference>
<reference key="15">
    <citation type="journal article" date="2016" name="Plant Cell">
        <title>The Arabidopsis malectin-like/LRR-RLK IOS1 is critical for BAK1-dependent and BAK1-independent pattern-triggered immunity.</title>
        <authorList>
            <person name="Yeh Y.-H."/>
            <person name="Panzeri D."/>
            <person name="Kadota Y."/>
            <person name="Huang Y.-C."/>
            <person name="Huang P.-Y."/>
            <person name="Tao C.-N."/>
            <person name="Roux M."/>
            <person name="Chien H.-C."/>
            <person name="Chin T.-C."/>
            <person name="Chu P.-W."/>
            <person name="Zipfel C."/>
            <person name="Zimmerli L."/>
        </authorList>
    </citation>
    <scope>INTERACTION WITH IOS1</scope>
</reference>
<reference key="16">
    <citation type="journal article" date="2018" name="Cell Host Microbe">
        <title>The receptor-like cytoplasmic kinase BIK1 localizes to the nucleus and regulates defense hormone expression during plant innate immunity.</title>
        <authorList>
            <person name="Lal N.K."/>
            <person name="Nagalakshmi U."/>
            <person name="Hurlburt N.K."/>
            <person name="Flores R."/>
            <person name="Bak A."/>
            <person name="Sone P."/>
            <person name="Ma X."/>
            <person name="Song G."/>
            <person name="Walley J."/>
            <person name="Shan L."/>
            <person name="He P."/>
            <person name="Casteel C."/>
            <person name="Fisher A.J."/>
            <person name="Dinesh-Kumar S.P."/>
        </authorList>
    </citation>
    <scope>FUNCTION</scope>
    <scope>CATALYTIC ACTIVITY</scope>
    <scope>INTERACTION WITH BIK1</scope>
    <source>
        <strain>cv. Columbia</strain>
    </source>
</reference>
<gene>
    <name evidence="17" type="primary">EFR</name>
    <name evidence="19" type="ordered locus">At5g20480</name>
    <name evidence="20" type="ORF">F7C8.70</name>
</gene>
<name>EFR_ARATH</name>